<evidence type="ECO:0000255" key="1">
    <source>
        <dbReference type="HAMAP-Rule" id="MF_00381"/>
    </source>
</evidence>
<protein>
    <recommendedName>
        <fullName evidence="1">Integration host factor subunit beta</fullName>
        <shortName evidence="1">IHF-beta</shortName>
    </recommendedName>
</protein>
<accession>C4LF00</accession>
<gene>
    <name evidence="1" type="primary">ihfB</name>
    <name evidence="1" type="synonym">himD</name>
    <name type="ordered locus">Tola_1556</name>
</gene>
<organism>
    <name type="scientific">Tolumonas auensis (strain DSM 9187 / NBRC 110442 / TA 4)</name>
    <dbReference type="NCBI Taxonomy" id="595494"/>
    <lineage>
        <taxon>Bacteria</taxon>
        <taxon>Pseudomonadati</taxon>
        <taxon>Pseudomonadota</taxon>
        <taxon>Gammaproteobacteria</taxon>
        <taxon>Aeromonadales</taxon>
        <taxon>Aeromonadaceae</taxon>
        <taxon>Tolumonas</taxon>
    </lineage>
</organism>
<feature type="chain" id="PRO_1000205700" description="Integration host factor subunit beta">
    <location>
        <begin position="1"/>
        <end position="93"/>
    </location>
</feature>
<sequence>MTKSDLIERLSSSQQHLAAKDVEAAVREILECMAATLESGNRIEIRGFGSFSLHYRAPRVGRNPKTGEKVELLAKSVPHFKPGKELRERVNSL</sequence>
<name>IHFB_TOLAT</name>
<comment type="function">
    <text evidence="1">This protein is one of the two subunits of integration host factor, a specific DNA-binding protein that functions in genetic recombination as well as in transcriptional and translational control.</text>
</comment>
<comment type="subunit">
    <text evidence="1">Heterodimer of an alpha and a beta chain.</text>
</comment>
<comment type="similarity">
    <text evidence="1">Belongs to the bacterial histone-like protein family.</text>
</comment>
<dbReference type="EMBL" id="CP001616">
    <property type="protein sequence ID" value="ACQ93167.1"/>
    <property type="molecule type" value="Genomic_DNA"/>
</dbReference>
<dbReference type="RefSeq" id="WP_015878638.1">
    <property type="nucleotide sequence ID" value="NC_012691.1"/>
</dbReference>
<dbReference type="SMR" id="C4LF00"/>
<dbReference type="STRING" id="595494.Tola_1556"/>
<dbReference type="KEGG" id="tau:Tola_1556"/>
<dbReference type="eggNOG" id="COG0776">
    <property type="taxonomic scope" value="Bacteria"/>
</dbReference>
<dbReference type="HOGENOM" id="CLU_105066_2_0_6"/>
<dbReference type="OrthoDB" id="9804203at2"/>
<dbReference type="Proteomes" id="UP000009073">
    <property type="component" value="Chromosome"/>
</dbReference>
<dbReference type="GO" id="GO:0005694">
    <property type="term" value="C:chromosome"/>
    <property type="evidence" value="ECO:0007669"/>
    <property type="project" value="InterPro"/>
</dbReference>
<dbReference type="GO" id="GO:0005829">
    <property type="term" value="C:cytosol"/>
    <property type="evidence" value="ECO:0007669"/>
    <property type="project" value="TreeGrafter"/>
</dbReference>
<dbReference type="GO" id="GO:0003677">
    <property type="term" value="F:DNA binding"/>
    <property type="evidence" value="ECO:0007669"/>
    <property type="project" value="UniProtKB-UniRule"/>
</dbReference>
<dbReference type="GO" id="GO:0030527">
    <property type="term" value="F:structural constituent of chromatin"/>
    <property type="evidence" value="ECO:0007669"/>
    <property type="project" value="InterPro"/>
</dbReference>
<dbReference type="GO" id="GO:0006310">
    <property type="term" value="P:DNA recombination"/>
    <property type="evidence" value="ECO:0007669"/>
    <property type="project" value="UniProtKB-UniRule"/>
</dbReference>
<dbReference type="GO" id="GO:0006355">
    <property type="term" value="P:regulation of DNA-templated transcription"/>
    <property type="evidence" value="ECO:0007669"/>
    <property type="project" value="UniProtKB-UniRule"/>
</dbReference>
<dbReference type="GO" id="GO:0006417">
    <property type="term" value="P:regulation of translation"/>
    <property type="evidence" value="ECO:0007669"/>
    <property type="project" value="UniProtKB-UniRule"/>
</dbReference>
<dbReference type="CDD" id="cd13836">
    <property type="entry name" value="IHF_B"/>
    <property type="match status" value="1"/>
</dbReference>
<dbReference type="FunFam" id="4.10.520.10:FF:000003">
    <property type="entry name" value="Integration host factor subunit beta"/>
    <property type="match status" value="1"/>
</dbReference>
<dbReference type="Gene3D" id="4.10.520.10">
    <property type="entry name" value="IHF-like DNA-binding proteins"/>
    <property type="match status" value="1"/>
</dbReference>
<dbReference type="HAMAP" id="MF_00381">
    <property type="entry name" value="IHF_beta"/>
    <property type="match status" value="1"/>
</dbReference>
<dbReference type="InterPro" id="IPR000119">
    <property type="entry name" value="Hist_DNA-bd"/>
</dbReference>
<dbReference type="InterPro" id="IPR020816">
    <property type="entry name" value="Histone-like_DNA-bd_CS"/>
</dbReference>
<dbReference type="InterPro" id="IPR010992">
    <property type="entry name" value="IHF-like_DNA-bd_dom_sf"/>
</dbReference>
<dbReference type="InterPro" id="IPR005685">
    <property type="entry name" value="IHF_beta"/>
</dbReference>
<dbReference type="NCBIfam" id="TIGR00988">
    <property type="entry name" value="hip"/>
    <property type="match status" value="1"/>
</dbReference>
<dbReference type="NCBIfam" id="NF001222">
    <property type="entry name" value="PRK00199.1"/>
    <property type="match status" value="1"/>
</dbReference>
<dbReference type="PANTHER" id="PTHR33175">
    <property type="entry name" value="DNA-BINDING PROTEIN HU"/>
    <property type="match status" value="1"/>
</dbReference>
<dbReference type="PANTHER" id="PTHR33175:SF5">
    <property type="entry name" value="INTEGRATION HOST FACTOR SUBUNIT BETA"/>
    <property type="match status" value="1"/>
</dbReference>
<dbReference type="Pfam" id="PF00216">
    <property type="entry name" value="Bac_DNA_binding"/>
    <property type="match status" value="1"/>
</dbReference>
<dbReference type="PRINTS" id="PR01727">
    <property type="entry name" value="DNABINDINGHU"/>
</dbReference>
<dbReference type="SMART" id="SM00411">
    <property type="entry name" value="BHL"/>
    <property type="match status" value="1"/>
</dbReference>
<dbReference type="SUPFAM" id="SSF47729">
    <property type="entry name" value="IHF-like DNA-binding proteins"/>
    <property type="match status" value="1"/>
</dbReference>
<dbReference type="PROSITE" id="PS00045">
    <property type="entry name" value="HISTONE_LIKE"/>
    <property type="match status" value="1"/>
</dbReference>
<keyword id="KW-0233">DNA recombination</keyword>
<keyword id="KW-0238">DNA-binding</keyword>
<keyword id="KW-1185">Reference proteome</keyword>
<keyword id="KW-0804">Transcription</keyword>
<keyword id="KW-0805">Transcription regulation</keyword>
<keyword id="KW-0810">Translation regulation</keyword>
<reference key="1">
    <citation type="submission" date="2009-05" db="EMBL/GenBank/DDBJ databases">
        <title>Complete sequence of Tolumonas auensis DSM 9187.</title>
        <authorList>
            <consortium name="US DOE Joint Genome Institute"/>
            <person name="Lucas S."/>
            <person name="Copeland A."/>
            <person name="Lapidus A."/>
            <person name="Glavina del Rio T."/>
            <person name="Tice H."/>
            <person name="Bruce D."/>
            <person name="Goodwin L."/>
            <person name="Pitluck S."/>
            <person name="Chertkov O."/>
            <person name="Brettin T."/>
            <person name="Detter J.C."/>
            <person name="Han C."/>
            <person name="Larimer F."/>
            <person name="Land M."/>
            <person name="Hauser L."/>
            <person name="Kyrpides N."/>
            <person name="Mikhailova N."/>
            <person name="Spring S."/>
            <person name="Beller H."/>
        </authorList>
    </citation>
    <scope>NUCLEOTIDE SEQUENCE [LARGE SCALE GENOMIC DNA]</scope>
    <source>
        <strain>DSM 9187 / NBRC 110442 / TA 4</strain>
    </source>
</reference>
<proteinExistence type="inferred from homology"/>